<gene>
    <name evidence="3 5" type="primary">AP</name>
</gene>
<dbReference type="EMBL" id="EF137865">
    <property type="protein sequence ID" value="ABM05493.1"/>
    <property type="molecule type" value="mRNA"/>
</dbReference>
<dbReference type="SMR" id="A1YV58"/>
<dbReference type="GO" id="GO:0005576">
    <property type="term" value="C:extracellular region"/>
    <property type="evidence" value="ECO:0000314"/>
    <property type="project" value="UniProtKB"/>
</dbReference>
<dbReference type="GO" id="GO:0050829">
    <property type="term" value="P:defense response to Gram-negative bacterium"/>
    <property type="evidence" value="ECO:0000314"/>
    <property type="project" value="UniProtKB"/>
</dbReference>
<dbReference type="GO" id="GO:0050830">
    <property type="term" value="P:defense response to Gram-positive bacterium"/>
    <property type="evidence" value="ECO:0000314"/>
    <property type="project" value="UniProtKB"/>
</dbReference>
<dbReference type="FunFam" id="3.30.160.320:FF:000001">
    <property type="entry name" value="Antimicrobial protein 1"/>
    <property type="match status" value="1"/>
</dbReference>
<dbReference type="Gene3D" id="3.30.160.320">
    <property type="match status" value="1"/>
</dbReference>
<dbReference type="InterPro" id="IPR024509">
    <property type="entry name" value="Anti-LPS_factor/Scygonadin"/>
</dbReference>
<dbReference type="InterPro" id="IPR038539">
    <property type="entry name" value="Anti-LPS_factor/Scygonadin_sf"/>
</dbReference>
<dbReference type="Pfam" id="PF11630">
    <property type="entry name" value="Anti-LPS-SCYG"/>
    <property type="match status" value="1"/>
</dbReference>
<feature type="signal peptide" evidence="1">
    <location>
        <begin position="1"/>
        <end position="24"/>
    </location>
</feature>
<feature type="chain" id="PRO_0000378057" description="Antimicrobial protein 1">
    <location>
        <begin position="25"/>
        <end position="126"/>
    </location>
</feature>
<comment type="function">
    <text evidence="2">Has antibacterial activity against the Gram-positive bacteria E.coli (MIC&lt;50 ug/ml) and P.aeruginosa (MIC&lt;25 ug/ml), and the Gram-negative bacteria S.aureus (MIC&lt;100 ug/ml) and S.pyogenes (MIC&lt;50 ug/ml).</text>
</comment>
<comment type="subcellular location">
    <subcellularLocation>
        <location evidence="2">Secreted</location>
    </subcellularLocation>
</comment>
<comment type="tissue specificity">
    <text evidence="2">Strongly expressed in gills, hemocytes and reproductive tract, with weaker expression in muscle, heart and digestive tract. Not detected in eyes and hepatopancreas (at protein level).</text>
</comment>
<evidence type="ECO:0000255" key="1"/>
<evidence type="ECO:0000269" key="2">
    <source>
    </source>
</evidence>
<evidence type="ECO:0000303" key="3">
    <source>
    </source>
</evidence>
<evidence type="ECO:0000305" key="4"/>
<evidence type="ECO:0000312" key="5">
    <source>
        <dbReference type="EMBL" id="ABM05493.1"/>
    </source>
</evidence>
<sequence>MRSSLLLGLTVVLLLGVTVPPCMAGQALNKLMPKIVSAIIYMIGQPNAGVTFLGHQCLVESTRQPDGFYTAKMWCTSWTSDNPIVGEGRSRVELEALKGSIRNFVQTASDYKKFTIEEVEDWIASY</sequence>
<reference evidence="4 5" key="1">
    <citation type="journal article" date="2009" name="Acta Biochim. Pol.">
        <title>Purification and characterization of antibacterial proteins from granular hemocytes of Indian mud crab, Scylla serrata.</title>
        <authorList>
            <person name="Yedery R.D."/>
            <person name="Reddy K.V.R."/>
        </authorList>
    </citation>
    <scope>NUCLEOTIDE SEQUENCE [MRNA]</scope>
    <scope>PROTEIN SEQUENCE OF 64-72; 92-98 AND 103-112</scope>
    <scope>FUNCTION</scope>
    <scope>SUBCELLULAR LOCATION</scope>
    <scope>TISSUE SPECIFICITY</scope>
    <source>
        <tissue evidence="2">Hemocyte</tissue>
    </source>
</reference>
<name>AMP1_SCYSE</name>
<organism>
    <name type="scientific">Scylla serrata</name>
    <name type="common">Mud crab</name>
    <dbReference type="NCBI Taxonomy" id="6761"/>
    <lineage>
        <taxon>Eukaryota</taxon>
        <taxon>Metazoa</taxon>
        <taxon>Ecdysozoa</taxon>
        <taxon>Arthropoda</taxon>
        <taxon>Crustacea</taxon>
        <taxon>Multicrustacea</taxon>
        <taxon>Malacostraca</taxon>
        <taxon>Eumalacostraca</taxon>
        <taxon>Eucarida</taxon>
        <taxon>Decapoda</taxon>
        <taxon>Pleocyemata</taxon>
        <taxon>Brachyura</taxon>
        <taxon>Eubrachyura</taxon>
        <taxon>Portunoidea</taxon>
        <taxon>Portunidae</taxon>
        <taxon>Portuninae</taxon>
        <taxon>Scylla</taxon>
    </lineage>
</organism>
<proteinExistence type="evidence at protein level"/>
<accession>A1YV58</accession>
<protein>
    <recommendedName>
        <fullName>Antimicrobial protein 1</fullName>
    </recommendedName>
</protein>
<keyword id="KW-0044">Antibiotic</keyword>
<keyword id="KW-0929">Antimicrobial</keyword>
<keyword id="KW-0903">Direct protein sequencing</keyword>
<keyword id="KW-0964">Secreted</keyword>
<keyword id="KW-0732">Signal</keyword>